<name>RS21_BORBZ</name>
<organism>
    <name type="scientific">Borreliella burgdorferi (strain ZS7)</name>
    <name type="common">Borrelia burgdorferi</name>
    <dbReference type="NCBI Taxonomy" id="445985"/>
    <lineage>
        <taxon>Bacteria</taxon>
        <taxon>Pseudomonadati</taxon>
        <taxon>Spirochaetota</taxon>
        <taxon>Spirochaetia</taxon>
        <taxon>Spirochaetales</taxon>
        <taxon>Borreliaceae</taxon>
        <taxon>Borreliella</taxon>
    </lineage>
</organism>
<dbReference type="EMBL" id="CP001205">
    <property type="protein sequence ID" value="ACK74816.1"/>
    <property type="molecule type" value="Genomic_DNA"/>
</dbReference>
<dbReference type="RefSeq" id="WP_002656880.1">
    <property type="nucleotide sequence ID" value="NC_011728.1"/>
</dbReference>
<dbReference type="SMR" id="B7J1I4"/>
<dbReference type="GeneID" id="83865728"/>
<dbReference type="KEGG" id="bbz:BbuZS7_0262"/>
<dbReference type="HOGENOM" id="CLU_159258_1_2_12"/>
<dbReference type="Proteomes" id="UP000006901">
    <property type="component" value="Chromosome"/>
</dbReference>
<dbReference type="GO" id="GO:1990904">
    <property type="term" value="C:ribonucleoprotein complex"/>
    <property type="evidence" value="ECO:0007669"/>
    <property type="project" value="UniProtKB-KW"/>
</dbReference>
<dbReference type="GO" id="GO:0005840">
    <property type="term" value="C:ribosome"/>
    <property type="evidence" value="ECO:0007669"/>
    <property type="project" value="UniProtKB-KW"/>
</dbReference>
<dbReference type="GO" id="GO:0003735">
    <property type="term" value="F:structural constituent of ribosome"/>
    <property type="evidence" value="ECO:0007669"/>
    <property type="project" value="InterPro"/>
</dbReference>
<dbReference type="GO" id="GO:0006412">
    <property type="term" value="P:translation"/>
    <property type="evidence" value="ECO:0007669"/>
    <property type="project" value="UniProtKB-UniRule"/>
</dbReference>
<dbReference type="Gene3D" id="1.20.5.1150">
    <property type="entry name" value="Ribosomal protein S8"/>
    <property type="match status" value="1"/>
</dbReference>
<dbReference type="HAMAP" id="MF_00358">
    <property type="entry name" value="Ribosomal_bS21"/>
    <property type="match status" value="1"/>
</dbReference>
<dbReference type="InterPro" id="IPR001911">
    <property type="entry name" value="Ribosomal_bS21"/>
</dbReference>
<dbReference type="InterPro" id="IPR018278">
    <property type="entry name" value="Ribosomal_bS21_CS"/>
</dbReference>
<dbReference type="InterPro" id="IPR038380">
    <property type="entry name" value="Ribosomal_bS21_sf"/>
</dbReference>
<dbReference type="NCBIfam" id="TIGR00030">
    <property type="entry name" value="S21p"/>
    <property type="match status" value="1"/>
</dbReference>
<dbReference type="PANTHER" id="PTHR21109">
    <property type="entry name" value="MITOCHONDRIAL 28S RIBOSOMAL PROTEIN S21"/>
    <property type="match status" value="1"/>
</dbReference>
<dbReference type="PANTHER" id="PTHR21109:SF22">
    <property type="entry name" value="SMALL RIBOSOMAL SUBUNIT PROTEIN BS21"/>
    <property type="match status" value="1"/>
</dbReference>
<dbReference type="Pfam" id="PF01165">
    <property type="entry name" value="Ribosomal_S21"/>
    <property type="match status" value="1"/>
</dbReference>
<dbReference type="PRINTS" id="PR00976">
    <property type="entry name" value="RIBOSOMALS21"/>
</dbReference>
<dbReference type="PROSITE" id="PS01181">
    <property type="entry name" value="RIBOSOMAL_S21"/>
    <property type="match status" value="1"/>
</dbReference>
<feature type="chain" id="PRO_1000120590" description="Small ribosomal subunit protein bS21">
    <location>
        <begin position="1"/>
        <end position="69"/>
    </location>
</feature>
<feature type="region of interest" description="Disordered" evidence="2">
    <location>
        <begin position="50"/>
        <end position="69"/>
    </location>
</feature>
<keyword id="KW-0687">Ribonucleoprotein</keyword>
<keyword id="KW-0689">Ribosomal protein</keyword>
<proteinExistence type="inferred from homology"/>
<accession>B7J1I4</accession>
<reference key="1">
    <citation type="journal article" date="2011" name="J. Bacteriol.">
        <title>Whole-genome sequences of thirteen isolates of Borrelia burgdorferi.</title>
        <authorList>
            <person name="Schutzer S.E."/>
            <person name="Fraser-Liggett C.M."/>
            <person name="Casjens S.R."/>
            <person name="Qiu W.G."/>
            <person name="Dunn J.J."/>
            <person name="Mongodin E.F."/>
            <person name="Luft B.J."/>
        </authorList>
    </citation>
    <scope>NUCLEOTIDE SEQUENCE [LARGE SCALE GENOMIC DNA]</scope>
    <source>
        <strain>ZS7</strain>
    </source>
</reference>
<protein>
    <recommendedName>
        <fullName evidence="1">Small ribosomal subunit protein bS21</fullName>
    </recommendedName>
    <alternativeName>
        <fullName evidence="3">30S ribosomal protein S21</fullName>
    </alternativeName>
</protein>
<comment type="similarity">
    <text evidence="1">Belongs to the bacterial ribosomal protein bS21 family.</text>
</comment>
<sequence>MVTVTVDKNENLEKALKRFKRMIEKEAIIREWKRREYYEKPSTIRVKKEKAFKRKQAKKVRKLKQKTNR</sequence>
<evidence type="ECO:0000255" key="1">
    <source>
        <dbReference type="HAMAP-Rule" id="MF_00358"/>
    </source>
</evidence>
<evidence type="ECO:0000256" key="2">
    <source>
        <dbReference type="SAM" id="MobiDB-lite"/>
    </source>
</evidence>
<evidence type="ECO:0000305" key="3"/>
<gene>
    <name evidence="1" type="primary">rpsU</name>
    <name type="ordered locus">BbuZS7_0262</name>
</gene>